<organism>
    <name type="scientific">Mycolicibacterium smegmatis (strain ATCC 700084 / mc(2)155)</name>
    <name type="common">Mycobacterium smegmatis</name>
    <dbReference type="NCBI Taxonomy" id="246196"/>
    <lineage>
        <taxon>Bacteria</taxon>
        <taxon>Bacillati</taxon>
        <taxon>Actinomycetota</taxon>
        <taxon>Actinomycetes</taxon>
        <taxon>Mycobacteriales</taxon>
        <taxon>Mycobacteriaceae</taxon>
        <taxon>Mycolicibacterium</taxon>
    </lineage>
</organism>
<name>RS4_MYCS2</name>
<feature type="chain" id="PRO_0000322311" description="Small ribosomal subunit protein uS4">
    <location>
        <begin position="1"/>
        <end position="201"/>
    </location>
</feature>
<feature type="domain" description="S4 RNA-binding" evidence="1">
    <location>
        <begin position="91"/>
        <end position="157"/>
    </location>
</feature>
<feature type="region of interest" description="Disordered" evidence="2">
    <location>
        <begin position="1"/>
        <end position="42"/>
    </location>
</feature>
<feature type="helix" evidence="5">
    <location>
        <begin position="10"/>
        <end position="15"/>
    </location>
</feature>
<feature type="strand" evidence="4">
    <location>
        <begin position="19"/>
        <end position="21"/>
    </location>
</feature>
<feature type="helix" evidence="4">
    <location>
        <begin position="24"/>
        <end position="28"/>
    </location>
</feature>
<feature type="turn" evidence="4">
    <location>
        <begin position="35"/>
        <end position="38"/>
    </location>
</feature>
<feature type="helix" evidence="5">
    <location>
        <begin position="49"/>
        <end position="60"/>
    </location>
</feature>
<feature type="helix" evidence="5">
    <location>
        <begin position="64"/>
        <end position="74"/>
    </location>
</feature>
<feature type="strand" evidence="5">
    <location>
        <begin position="77"/>
        <end position="79"/>
    </location>
</feature>
<feature type="helix" evidence="5">
    <location>
        <begin position="81"/>
        <end position="90"/>
    </location>
</feature>
<feature type="helix" evidence="5">
    <location>
        <begin position="93"/>
        <end position="100"/>
    </location>
</feature>
<feature type="strand" evidence="5">
    <location>
        <begin position="102"/>
        <end position="105"/>
    </location>
</feature>
<feature type="helix" evidence="5">
    <location>
        <begin position="106"/>
        <end position="114"/>
    </location>
</feature>
<feature type="strand" evidence="5">
    <location>
        <begin position="118"/>
        <end position="123"/>
    </location>
</feature>
<feature type="strand" evidence="5">
    <location>
        <begin position="137"/>
        <end position="140"/>
    </location>
</feature>
<feature type="helix" evidence="4">
    <location>
        <begin position="142"/>
        <end position="145"/>
    </location>
</feature>
<feature type="helix" evidence="4">
    <location>
        <begin position="148"/>
        <end position="155"/>
    </location>
</feature>
<feature type="strand" evidence="4">
    <location>
        <begin position="164"/>
        <end position="168"/>
    </location>
</feature>
<feature type="strand" evidence="4">
    <location>
        <begin position="175"/>
        <end position="177"/>
    </location>
</feature>
<feature type="helix" evidence="4">
    <location>
        <begin position="183"/>
        <end position="186"/>
    </location>
</feature>
<feature type="helix" evidence="5">
    <location>
        <begin position="192"/>
        <end position="198"/>
    </location>
</feature>
<keyword id="KW-0002">3D-structure</keyword>
<keyword id="KW-1185">Reference proteome</keyword>
<keyword id="KW-0687">Ribonucleoprotein</keyword>
<keyword id="KW-0689">Ribosomal protein</keyword>
<keyword id="KW-0694">RNA-binding</keyword>
<keyword id="KW-0699">rRNA-binding</keyword>
<proteinExistence type="evidence at protein level"/>
<reference key="1">
    <citation type="submission" date="2006-10" db="EMBL/GenBank/DDBJ databases">
        <authorList>
            <person name="Fleischmann R.D."/>
            <person name="Dodson R.J."/>
            <person name="Haft D.H."/>
            <person name="Merkel J.S."/>
            <person name="Nelson W.C."/>
            <person name="Fraser C.M."/>
        </authorList>
    </citation>
    <scope>NUCLEOTIDE SEQUENCE [LARGE SCALE GENOMIC DNA]</scope>
    <source>
        <strain>ATCC 700084 / mc(2)155</strain>
    </source>
</reference>
<reference key="2">
    <citation type="journal article" date="2007" name="Genome Biol.">
        <title>Interrupted coding sequences in Mycobacterium smegmatis: authentic mutations or sequencing errors?</title>
        <authorList>
            <person name="Deshayes C."/>
            <person name="Perrodou E."/>
            <person name="Gallien S."/>
            <person name="Euphrasie D."/>
            <person name="Schaeffer C."/>
            <person name="Van-Dorsselaer A."/>
            <person name="Poch O."/>
            <person name="Lecompte O."/>
            <person name="Reyrat J.-M."/>
        </authorList>
    </citation>
    <scope>NUCLEOTIDE SEQUENCE [LARGE SCALE GENOMIC DNA]</scope>
    <source>
        <strain>ATCC 700084 / mc(2)155</strain>
    </source>
</reference>
<reference key="3">
    <citation type="journal article" date="2009" name="Genome Res.">
        <title>Ortho-proteogenomics: multiple proteomes investigation through orthology and a new MS-based protocol.</title>
        <authorList>
            <person name="Gallien S."/>
            <person name="Perrodou E."/>
            <person name="Carapito C."/>
            <person name="Deshayes C."/>
            <person name="Reyrat J.-M."/>
            <person name="Van Dorsselaer A."/>
            <person name="Poch O."/>
            <person name="Schaeffer C."/>
            <person name="Lecompte O."/>
        </authorList>
    </citation>
    <scope>NUCLEOTIDE SEQUENCE [LARGE SCALE GENOMIC DNA]</scope>
    <scope>IDENTIFICATION BY MASS SPECTROMETRY [LARGE SCALE ANALYSIS]</scope>
    <source>
        <strain>ATCC 700084 / mc(2)155</strain>
    </source>
</reference>
<accession>A0QSL7</accession>
<accession>I7F8S3</accession>
<gene>
    <name evidence="1" type="primary">rpsD</name>
    <name type="ordered locus">MSMEG_1523</name>
    <name type="ordered locus">MSMEI_1487</name>
</gene>
<evidence type="ECO:0000255" key="1">
    <source>
        <dbReference type="HAMAP-Rule" id="MF_01306"/>
    </source>
</evidence>
<evidence type="ECO:0000256" key="2">
    <source>
        <dbReference type="SAM" id="MobiDB-lite"/>
    </source>
</evidence>
<evidence type="ECO:0000305" key="3"/>
<evidence type="ECO:0007829" key="4">
    <source>
        <dbReference type="PDB" id="5O5J"/>
    </source>
</evidence>
<evidence type="ECO:0007829" key="5">
    <source>
        <dbReference type="PDB" id="5XYU"/>
    </source>
</evidence>
<protein>
    <recommendedName>
        <fullName evidence="1">Small ribosomal subunit protein uS4</fullName>
    </recommendedName>
    <alternativeName>
        <fullName evidence="3">30S ribosomal protein S4</fullName>
    </alternativeName>
</protein>
<dbReference type="EMBL" id="CP000480">
    <property type="protein sequence ID" value="ABK70484.1"/>
    <property type="molecule type" value="Genomic_DNA"/>
</dbReference>
<dbReference type="EMBL" id="CP001663">
    <property type="protein sequence ID" value="AFP37960.1"/>
    <property type="molecule type" value="Genomic_DNA"/>
</dbReference>
<dbReference type="RefSeq" id="WP_003892911.1">
    <property type="nucleotide sequence ID" value="NZ_SIJM01000016.1"/>
</dbReference>
<dbReference type="RefSeq" id="YP_885905.1">
    <property type="nucleotide sequence ID" value="NC_008596.1"/>
</dbReference>
<dbReference type="PDB" id="5O5J">
    <property type="method" value="EM"/>
    <property type="resolution" value="3.45 A"/>
    <property type="chains" value="D=1-201"/>
</dbReference>
<dbReference type="PDB" id="5O61">
    <property type="method" value="EM"/>
    <property type="resolution" value="3.31 A"/>
    <property type="chains" value="BD=1-201"/>
</dbReference>
<dbReference type="PDB" id="5XYU">
    <property type="method" value="EM"/>
    <property type="resolution" value="3.45 A"/>
    <property type="chains" value="D=1-201"/>
</dbReference>
<dbReference type="PDB" id="5ZEB">
    <property type="method" value="EM"/>
    <property type="resolution" value="3.40 A"/>
    <property type="chains" value="d=1-201"/>
</dbReference>
<dbReference type="PDB" id="5ZEP">
    <property type="method" value="EM"/>
    <property type="resolution" value="3.40 A"/>
    <property type="chains" value="d=1-201"/>
</dbReference>
<dbReference type="PDB" id="5ZEU">
    <property type="method" value="EM"/>
    <property type="resolution" value="3.70 A"/>
    <property type="chains" value="d=1-201"/>
</dbReference>
<dbReference type="PDB" id="6DZI">
    <property type="method" value="EM"/>
    <property type="resolution" value="3.46 A"/>
    <property type="chains" value="l=2-201"/>
</dbReference>
<dbReference type="PDB" id="6DZK">
    <property type="method" value="EM"/>
    <property type="resolution" value="3.60 A"/>
    <property type="chains" value="D=1-201"/>
</dbReference>
<dbReference type="PDB" id="8FR8">
    <property type="method" value="EM"/>
    <property type="resolution" value="2.76 A"/>
    <property type="chains" value="e=2-201"/>
</dbReference>
<dbReference type="PDB" id="8V9J">
    <property type="method" value="EM"/>
    <property type="resolution" value="3.10 A"/>
    <property type="chains" value="d=1-201"/>
</dbReference>
<dbReference type="PDB" id="8V9K">
    <property type="method" value="EM"/>
    <property type="resolution" value="3.10 A"/>
    <property type="chains" value="d=1-201"/>
</dbReference>
<dbReference type="PDB" id="8V9L">
    <property type="method" value="EM"/>
    <property type="resolution" value="3.00 A"/>
    <property type="chains" value="d=1-201"/>
</dbReference>
<dbReference type="PDB" id="8VIO">
    <property type="method" value="EM"/>
    <property type="resolution" value="3.26 A"/>
    <property type="chains" value="j=1-201"/>
</dbReference>
<dbReference type="PDB" id="8WHX">
    <property type="method" value="EM"/>
    <property type="resolution" value="2.80 A"/>
    <property type="chains" value="e=1-201"/>
</dbReference>
<dbReference type="PDB" id="8WI7">
    <property type="method" value="EM"/>
    <property type="resolution" value="3.50 A"/>
    <property type="chains" value="e=1-201"/>
</dbReference>
<dbReference type="PDB" id="8WI9">
    <property type="method" value="EM"/>
    <property type="resolution" value="3.50 A"/>
    <property type="chains" value="e=1-201"/>
</dbReference>
<dbReference type="PDB" id="8WIB">
    <property type="method" value="EM"/>
    <property type="resolution" value="3.50 A"/>
    <property type="chains" value="e=1-201"/>
</dbReference>
<dbReference type="PDB" id="8WID">
    <property type="method" value="EM"/>
    <property type="resolution" value="3.50 A"/>
    <property type="chains" value="e=1-201"/>
</dbReference>
<dbReference type="PDB" id="8WIF">
    <property type="method" value="EM"/>
    <property type="resolution" value="2.90 A"/>
    <property type="chains" value="e=1-201"/>
</dbReference>
<dbReference type="PDBsum" id="5O5J"/>
<dbReference type="PDBsum" id="5O61"/>
<dbReference type="PDBsum" id="5XYU"/>
<dbReference type="PDBsum" id="5ZEB"/>
<dbReference type="PDBsum" id="5ZEP"/>
<dbReference type="PDBsum" id="5ZEU"/>
<dbReference type="PDBsum" id="6DZI"/>
<dbReference type="PDBsum" id="6DZK"/>
<dbReference type="PDBsum" id="8FR8"/>
<dbReference type="PDBsum" id="8V9J"/>
<dbReference type="PDBsum" id="8V9K"/>
<dbReference type="PDBsum" id="8V9L"/>
<dbReference type="PDBsum" id="8VIO"/>
<dbReference type="PDBsum" id="8WHX"/>
<dbReference type="PDBsum" id="8WI7"/>
<dbReference type="PDBsum" id="8WI9"/>
<dbReference type="PDBsum" id="8WIB"/>
<dbReference type="PDBsum" id="8WID"/>
<dbReference type="PDBsum" id="8WIF"/>
<dbReference type="EMDB" id="EMD-29397"/>
<dbReference type="EMDB" id="EMD-3748"/>
<dbReference type="EMDB" id="EMD-3751"/>
<dbReference type="EMDB" id="EMD-37551"/>
<dbReference type="EMDB" id="EMD-37559"/>
<dbReference type="EMDB" id="EMD-37561"/>
<dbReference type="EMDB" id="EMD-37562"/>
<dbReference type="EMDB" id="EMD-37564"/>
<dbReference type="EMDB" id="EMD-43074"/>
<dbReference type="EMDB" id="EMD-43075"/>
<dbReference type="EMDB" id="EMD-43076"/>
<dbReference type="EMDB" id="EMD-43267"/>
<dbReference type="EMDB" id="EMD-6790"/>
<dbReference type="EMDB" id="EMD-6920"/>
<dbReference type="EMDB" id="EMD-6921"/>
<dbReference type="EMDB" id="EMD-6923"/>
<dbReference type="EMDB" id="EMD-8932"/>
<dbReference type="EMDB" id="EMD-8934"/>
<dbReference type="SMR" id="A0QSL7"/>
<dbReference type="IntAct" id="A0QSL7">
    <property type="interactions" value="1"/>
</dbReference>
<dbReference type="STRING" id="246196.MSMEG_1523"/>
<dbReference type="PaxDb" id="246196-MSMEI_1487"/>
<dbReference type="GeneID" id="93456365"/>
<dbReference type="KEGG" id="msb:LJ00_07610"/>
<dbReference type="KEGG" id="msg:MSMEI_1487"/>
<dbReference type="KEGG" id="msm:MSMEG_1523"/>
<dbReference type="PATRIC" id="fig|246196.19.peg.1508"/>
<dbReference type="eggNOG" id="COG0522">
    <property type="taxonomic scope" value="Bacteria"/>
</dbReference>
<dbReference type="OrthoDB" id="9803672at2"/>
<dbReference type="Proteomes" id="UP000000757">
    <property type="component" value="Chromosome"/>
</dbReference>
<dbReference type="Proteomes" id="UP000006158">
    <property type="component" value="Chromosome"/>
</dbReference>
<dbReference type="GO" id="GO:0015935">
    <property type="term" value="C:small ribosomal subunit"/>
    <property type="evidence" value="ECO:0007669"/>
    <property type="project" value="InterPro"/>
</dbReference>
<dbReference type="GO" id="GO:0019843">
    <property type="term" value="F:rRNA binding"/>
    <property type="evidence" value="ECO:0007669"/>
    <property type="project" value="UniProtKB-UniRule"/>
</dbReference>
<dbReference type="GO" id="GO:0003735">
    <property type="term" value="F:structural constituent of ribosome"/>
    <property type="evidence" value="ECO:0007669"/>
    <property type="project" value="InterPro"/>
</dbReference>
<dbReference type="GO" id="GO:0042274">
    <property type="term" value="P:ribosomal small subunit biogenesis"/>
    <property type="evidence" value="ECO:0007669"/>
    <property type="project" value="TreeGrafter"/>
</dbReference>
<dbReference type="GO" id="GO:0006412">
    <property type="term" value="P:translation"/>
    <property type="evidence" value="ECO:0007669"/>
    <property type="project" value="UniProtKB-UniRule"/>
</dbReference>
<dbReference type="CDD" id="cd00165">
    <property type="entry name" value="S4"/>
    <property type="match status" value="1"/>
</dbReference>
<dbReference type="FunFam" id="3.10.290.10:FF:000001">
    <property type="entry name" value="30S ribosomal protein S4"/>
    <property type="match status" value="1"/>
</dbReference>
<dbReference type="Gene3D" id="1.10.1050.10">
    <property type="entry name" value="Ribosomal Protein S4 Delta 41, Chain A, domain 1"/>
    <property type="match status" value="1"/>
</dbReference>
<dbReference type="Gene3D" id="3.10.290.10">
    <property type="entry name" value="RNA-binding S4 domain"/>
    <property type="match status" value="1"/>
</dbReference>
<dbReference type="HAMAP" id="MF_01306_B">
    <property type="entry name" value="Ribosomal_uS4_B"/>
    <property type="match status" value="1"/>
</dbReference>
<dbReference type="InterPro" id="IPR022801">
    <property type="entry name" value="Ribosomal_uS4"/>
</dbReference>
<dbReference type="InterPro" id="IPR005709">
    <property type="entry name" value="Ribosomal_uS4_bac-type"/>
</dbReference>
<dbReference type="InterPro" id="IPR018079">
    <property type="entry name" value="Ribosomal_uS4_CS"/>
</dbReference>
<dbReference type="InterPro" id="IPR001912">
    <property type="entry name" value="Ribosomal_uS4_N"/>
</dbReference>
<dbReference type="InterPro" id="IPR002942">
    <property type="entry name" value="S4_RNA-bd"/>
</dbReference>
<dbReference type="InterPro" id="IPR036986">
    <property type="entry name" value="S4_RNA-bd_sf"/>
</dbReference>
<dbReference type="NCBIfam" id="NF003717">
    <property type="entry name" value="PRK05327.1"/>
    <property type="match status" value="1"/>
</dbReference>
<dbReference type="NCBIfam" id="TIGR01017">
    <property type="entry name" value="rpsD_bact"/>
    <property type="match status" value="1"/>
</dbReference>
<dbReference type="PANTHER" id="PTHR11831">
    <property type="entry name" value="30S 40S RIBOSOMAL PROTEIN"/>
    <property type="match status" value="1"/>
</dbReference>
<dbReference type="PANTHER" id="PTHR11831:SF4">
    <property type="entry name" value="SMALL RIBOSOMAL SUBUNIT PROTEIN US4M"/>
    <property type="match status" value="1"/>
</dbReference>
<dbReference type="Pfam" id="PF00163">
    <property type="entry name" value="Ribosomal_S4"/>
    <property type="match status" value="1"/>
</dbReference>
<dbReference type="Pfam" id="PF01479">
    <property type="entry name" value="S4"/>
    <property type="match status" value="1"/>
</dbReference>
<dbReference type="SMART" id="SM01390">
    <property type="entry name" value="Ribosomal_S4"/>
    <property type="match status" value="1"/>
</dbReference>
<dbReference type="SMART" id="SM00363">
    <property type="entry name" value="S4"/>
    <property type="match status" value="1"/>
</dbReference>
<dbReference type="SUPFAM" id="SSF55174">
    <property type="entry name" value="Alpha-L RNA-binding motif"/>
    <property type="match status" value="1"/>
</dbReference>
<dbReference type="PROSITE" id="PS00632">
    <property type="entry name" value="RIBOSOMAL_S4"/>
    <property type="match status" value="1"/>
</dbReference>
<dbReference type="PROSITE" id="PS50889">
    <property type="entry name" value="S4"/>
    <property type="match status" value="1"/>
</dbReference>
<comment type="function">
    <text evidence="1">One of the primary rRNA binding proteins, it binds directly to 16S rRNA where it nucleates assembly of the body of the 30S subunit.</text>
</comment>
<comment type="function">
    <text evidence="1">With S5 and S12 plays an important role in translational accuracy.</text>
</comment>
<comment type="subunit">
    <text evidence="1">Part of the 30S ribosomal subunit. Contacts protein S5. The interaction surface between S4 and S5 is involved in control of translational fidelity.</text>
</comment>
<comment type="similarity">
    <text evidence="1">Belongs to the universal ribosomal protein uS4 family.</text>
</comment>
<sequence length="201" mass="23376">MARYTGPATRKSRRLGVDLVGGDQSFEKRPYPPGQHGRARIKESEYRQQLQEKQKARFSYGVMEKQFRRYYEEANRQPGKTGDNLLRILESRLDNVVYRAGLARTRRMARQLVSHGHFLVNGVKVDIPSYRVSQYDIIDVKEKSLNTLPFQIARETAGERPIPSWLQVVGERQRILVHQLPERAQIDVPLTEQLIVELYSK</sequence>